<gene>
    <name evidence="1" type="primary">rplK</name>
    <name evidence="1" type="synonym">rpl11</name>
    <name type="ordered locus">SynRCC307_2358</name>
</gene>
<comment type="function">
    <text evidence="1">Forms part of the ribosomal stalk which helps the ribosome interact with GTP-bound translation factors.</text>
</comment>
<comment type="subunit">
    <text evidence="1">Part of the ribosomal stalk of the 50S ribosomal subunit. Interacts with L10 and the large rRNA to form the base of the stalk. L10 forms an elongated spine to which L12 dimers bind in a sequential fashion forming a multimeric L10(L12)X complex.</text>
</comment>
<comment type="PTM">
    <text evidence="1">One or more lysine residues are methylated.</text>
</comment>
<comment type="similarity">
    <text evidence="1">Belongs to the universal ribosomal protein uL11 family.</text>
</comment>
<keyword id="KW-0488">Methylation</keyword>
<keyword id="KW-1185">Reference proteome</keyword>
<keyword id="KW-0687">Ribonucleoprotein</keyword>
<keyword id="KW-0689">Ribosomal protein</keyword>
<keyword id="KW-0694">RNA-binding</keyword>
<keyword id="KW-0699">rRNA-binding</keyword>
<reference key="1">
    <citation type="submission" date="2006-05" db="EMBL/GenBank/DDBJ databases">
        <authorList>
            <consortium name="Genoscope"/>
        </authorList>
    </citation>
    <scope>NUCLEOTIDE SEQUENCE [LARGE SCALE GENOMIC DNA]</scope>
    <source>
        <strain>RCC307</strain>
    </source>
</reference>
<organism>
    <name type="scientific">Synechococcus sp. (strain RCC307)</name>
    <dbReference type="NCBI Taxonomy" id="316278"/>
    <lineage>
        <taxon>Bacteria</taxon>
        <taxon>Bacillati</taxon>
        <taxon>Cyanobacteriota</taxon>
        <taxon>Cyanophyceae</taxon>
        <taxon>Synechococcales</taxon>
        <taxon>Synechococcaceae</taxon>
        <taxon>Synechococcus</taxon>
    </lineage>
</organism>
<sequence>MAKKVTAVIKLALQAGKANPAPPVGPALGQHGVNIMAFCKEYNARTQDKAGFVIPVEISVFEDRSFTFITKTPPASVLIVKAAGIEKGSGESAKGSVGSITRAQLEEIANTKLPDLNCSSVESAMRIIEGTARNMGVAVKD</sequence>
<name>RL11_SYNR3</name>
<proteinExistence type="inferred from homology"/>
<protein>
    <recommendedName>
        <fullName evidence="1">Large ribosomal subunit protein uL11</fullName>
    </recommendedName>
    <alternativeName>
        <fullName evidence="2">50S ribosomal protein L11</fullName>
    </alternativeName>
</protein>
<accession>A5GWK2</accession>
<dbReference type="EMBL" id="CT978603">
    <property type="protein sequence ID" value="CAK29261.1"/>
    <property type="molecule type" value="Genomic_DNA"/>
</dbReference>
<dbReference type="SMR" id="A5GWK2"/>
<dbReference type="STRING" id="316278.SynRCC307_2358"/>
<dbReference type="KEGG" id="syr:SynRCC307_2358"/>
<dbReference type="eggNOG" id="COG0080">
    <property type="taxonomic scope" value="Bacteria"/>
</dbReference>
<dbReference type="HOGENOM" id="CLU_074237_2_2_3"/>
<dbReference type="OrthoDB" id="9802408at2"/>
<dbReference type="Proteomes" id="UP000001115">
    <property type="component" value="Chromosome"/>
</dbReference>
<dbReference type="GO" id="GO:0022625">
    <property type="term" value="C:cytosolic large ribosomal subunit"/>
    <property type="evidence" value="ECO:0007669"/>
    <property type="project" value="TreeGrafter"/>
</dbReference>
<dbReference type="GO" id="GO:0070180">
    <property type="term" value="F:large ribosomal subunit rRNA binding"/>
    <property type="evidence" value="ECO:0007669"/>
    <property type="project" value="UniProtKB-UniRule"/>
</dbReference>
<dbReference type="GO" id="GO:0003735">
    <property type="term" value="F:structural constituent of ribosome"/>
    <property type="evidence" value="ECO:0007669"/>
    <property type="project" value="InterPro"/>
</dbReference>
<dbReference type="GO" id="GO:0006412">
    <property type="term" value="P:translation"/>
    <property type="evidence" value="ECO:0007669"/>
    <property type="project" value="UniProtKB-UniRule"/>
</dbReference>
<dbReference type="CDD" id="cd00349">
    <property type="entry name" value="Ribosomal_L11"/>
    <property type="match status" value="1"/>
</dbReference>
<dbReference type="FunFam" id="1.10.10.250:FF:000001">
    <property type="entry name" value="50S ribosomal protein L11"/>
    <property type="match status" value="1"/>
</dbReference>
<dbReference type="FunFam" id="3.30.1550.10:FF:000001">
    <property type="entry name" value="50S ribosomal protein L11"/>
    <property type="match status" value="1"/>
</dbReference>
<dbReference type="Gene3D" id="1.10.10.250">
    <property type="entry name" value="Ribosomal protein L11, C-terminal domain"/>
    <property type="match status" value="1"/>
</dbReference>
<dbReference type="Gene3D" id="3.30.1550.10">
    <property type="entry name" value="Ribosomal protein L11/L12, N-terminal domain"/>
    <property type="match status" value="1"/>
</dbReference>
<dbReference type="HAMAP" id="MF_00736">
    <property type="entry name" value="Ribosomal_uL11"/>
    <property type="match status" value="1"/>
</dbReference>
<dbReference type="InterPro" id="IPR000911">
    <property type="entry name" value="Ribosomal_uL11"/>
</dbReference>
<dbReference type="InterPro" id="IPR006519">
    <property type="entry name" value="Ribosomal_uL11_bac-typ"/>
</dbReference>
<dbReference type="InterPro" id="IPR020783">
    <property type="entry name" value="Ribosomal_uL11_C"/>
</dbReference>
<dbReference type="InterPro" id="IPR036769">
    <property type="entry name" value="Ribosomal_uL11_C_sf"/>
</dbReference>
<dbReference type="InterPro" id="IPR020785">
    <property type="entry name" value="Ribosomal_uL11_CS"/>
</dbReference>
<dbReference type="InterPro" id="IPR020784">
    <property type="entry name" value="Ribosomal_uL11_N"/>
</dbReference>
<dbReference type="InterPro" id="IPR036796">
    <property type="entry name" value="Ribosomal_uL11_N_sf"/>
</dbReference>
<dbReference type="NCBIfam" id="TIGR01632">
    <property type="entry name" value="L11_bact"/>
    <property type="match status" value="1"/>
</dbReference>
<dbReference type="PANTHER" id="PTHR11661">
    <property type="entry name" value="60S RIBOSOMAL PROTEIN L12"/>
    <property type="match status" value="1"/>
</dbReference>
<dbReference type="PANTHER" id="PTHR11661:SF1">
    <property type="entry name" value="LARGE RIBOSOMAL SUBUNIT PROTEIN UL11M"/>
    <property type="match status" value="1"/>
</dbReference>
<dbReference type="Pfam" id="PF00298">
    <property type="entry name" value="Ribosomal_L11"/>
    <property type="match status" value="1"/>
</dbReference>
<dbReference type="Pfam" id="PF03946">
    <property type="entry name" value="Ribosomal_L11_N"/>
    <property type="match status" value="1"/>
</dbReference>
<dbReference type="SMART" id="SM00649">
    <property type="entry name" value="RL11"/>
    <property type="match status" value="1"/>
</dbReference>
<dbReference type="SUPFAM" id="SSF54747">
    <property type="entry name" value="Ribosomal L11/L12e N-terminal domain"/>
    <property type="match status" value="1"/>
</dbReference>
<dbReference type="SUPFAM" id="SSF46906">
    <property type="entry name" value="Ribosomal protein L11, C-terminal domain"/>
    <property type="match status" value="1"/>
</dbReference>
<dbReference type="PROSITE" id="PS00359">
    <property type="entry name" value="RIBOSOMAL_L11"/>
    <property type="match status" value="1"/>
</dbReference>
<feature type="chain" id="PRO_1000046283" description="Large ribosomal subunit protein uL11">
    <location>
        <begin position="1"/>
        <end position="141"/>
    </location>
</feature>
<evidence type="ECO:0000255" key="1">
    <source>
        <dbReference type="HAMAP-Rule" id="MF_00736"/>
    </source>
</evidence>
<evidence type="ECO:0000305" key="2"/>